<sequence length="306" mass="33822">MNWITNYVRPKINSILGRREIPENLWIKDPTSGEMVFHKDLEANQYVIPASGHHMHISAKNRLMHFFDDGVYTPIENPKVVTDPLKFRDAKRYIDRLKEYRAKLGVDDNILSARGTIEGLPIIATVQDFAFMGGSLGMASGEAIIEAFHTAIADKCPLVLFAASGGARMQEGTLSLMQMPRTTVAIEMMKEARLPYIVVLTNPTTGGVTASYAMLGDVHIAEPGAMIGFAGPRVIQQTIRETLPEGFQSSEYLLEHGMVDMVVSRLDMKATIAKILRLMMKFPAAPEPSHAFSKDSQTQISKTKAA</sequence>
<proteinExistence type="inferred from homology"/>
<gene>
    <name evidence="1" type="primary">accD</name>
    <name type="ordered locus">BARBAKC583_1351</name>
</gene>
<name>ACCD_BARBK</name>
<keyword id="KW-0067">ATP-binding</keyword>
<keyword id="KW-0963">Cytoplasm</keyword>
<keyword id="KW-0275">Fatty acid biosynthesis</keyword>
<keyword id="KW-0276">Fatty acid metabolism</keyword>
<keyword id="KW-0444">Lipid biosynthesis</keyword>
<keyword id="KW-0443">Lipid metabolism</keyword>
<keyword id="KW-0547">Nucleotide-binding</keyword>
<keyword id="KW-0808">Transferase</keyword>
<dbReference type="EC" id="2.1.3.15" evidence="1"/>
<dbReference type="EMBL" id="CP000524">
    <property type="protein sequence ID" value="ABM45463.1"/>
    <property type="molecule type" value="Genomic_DNA"/>
</dbReference>
<dbReference type="RefSeq" id="WP_005768157.1">
    <property type="nucleotide sequence ID" value="NC_008783.1"/>
</dbReference>
<dbReference type="SMR" id="A1UUE5"/>
<dbReference type="STRING" id="360095.BARBAKC583_1351"/>
<dbReference type="GeneID" id="4684181"/>
<dbReference type="KEGG" id="bbk:BARBAKC583_1351"/>
<dbReference type="PATRIC" id="fig|360095.6.peg.1324"/>
<dbReference type="eggNOG" id="COG0777">
    <property type="taxonomic scope" value="Bacteria"/>
</dbReference>
<dbReference type="HOGENOM" id="CLU_015486_1_0_5"/>
<dbReference type="OrthoDB" id="9772975at2"/>
<dbReference type="UniPathway" id="UPA00655">
    <property type="reaction ID" value="UER00711"/>
</dbReference>
<dbReference type="Proteomes" id="UP000000643">
    <property type="component" value="Chromosome"/>
</dbReference>
<dbReference type="GO" id="GO:0009329">
    <property type="term" value="C:acetate CoA-transferase complex"/>
    <property type="evidence" value="ECO:0007669"/>
    <property type="project" value="TreeGrafter"/>
</dbReference>
<dbReference type="GO" id="GO:0003989">
    <property type="term" value="F:acetyl-CoA carboxylase activity"/>
    <property type="evidence" value="ECO:0007669"/>
    <property type="project" value="InterPro"/>
</dbReference>
<dbReference type="GO" id="GO:0005524">
    <property type="term" value="F:ATP binding"/>
    <property type="evidence" value="ECO:0007669"/>
    <property type="project" value="UniProtKB-KW"/>
</dbReference>
<dbReference type="GO" id="GO:0016743">
    <property type="term" value="F:carboxyl- or carbamoyltransferase activity"/>
    <property type="evidence" value="ECO:0007669"/>
    <property type="project" value="UniProtKB-UniRule"/>
</dbReference>
<dbReference type="GO" id="GO:0006633">
    <property type="term" value="P:fatty acid biosynthetic process"/>
    <property type="evidence" value="ECO:0007669"/>
    <property type="project" value="UniProtKB-KW"/>
</dbReference>
<dbReference type="GO" id="GO:2001295">
    <property type="term" value="P:malonyl-CoA biosynthetic process"/>
    <property type="evidence" value="ECO:0007669"/>
    <property type="project" value="UniProtKB-UniRule"/>
</dbReference>
<dbReference type="Gene3D" id="3.90.226.10">
    <property type="entry name" value="2-enoyl-CoA Hydratase, Chain A, domain 1"/>
    <property type="match status" value="1"/>
</dbReference>
<dbReference type="HAMAP" id="MF_01395">
    <property type="entry name" value="AcetylCoA_CT_beta"/>
    <property type="match status" value="1"/>
</dbReference>
<dbReference type="InterPro" id="IPR034733">
    <property type="entry name" value="AcCoA_carboxyl_beta"/>
</dbReference>
<dbReference type="InterPro" id="IPR000438">
    <property type="entry name" value="Acetyl_CoA_COase_Trfase_b_su"/>
</dbReference>
<dbReference type="InterPro" id="IPR029045">
    <property type="entry name" value="ClpP/crotonase-like_dom_sf"/>
</dbReference>
<dbReference type="InterPro" id="IPR011762">
    <property type="entry name" value="COA_CT_N"/>
</dbReference>
<dbReference type="NCBIfam" id="TIGR00515">
    <property type="entry name" value="accD"/>
    <property type="match status" value="1"/>
</dbReference>
<dbReference type="PANTHER" id="PTHR42995">
    <property type="entry name" value="ACETYL-COENZYME A CARBOXYLASE CARBOXYL TRANSFERASE SUBUNIT BETA, CHLOROPLASTIC"/>
    <property type="match status" value="1"/>
</dbReference>
<dbReference type="PANTHER" id="PTHR42995:SF5">
    <property type="entry name" value="ACETYL-COENZYME A CARBOXYLASE CARBOXYL TRANSFERASE SUBUNIT BETA, CHLOROPLASTIC"/>
    <property type="match status" value="1"/>
</dbReference>
<dbReference type="Pfam" id="PF01039">
    <property type="entry name" value="Carboxyl_trans"/>
    <property type="match status" value="1"/>
</dbReference>
<dbReference type="PRINTS" id="PR01070">
    <property type="entry name" value="ACCCTRFRASEB"/>
</dbReference>
<dbReference type="SUPFAM" id="SSF52096">
    <property type="entry name" value="ClpP/crotonase"/>
    <property type="match status" value="1"/>
</dbReference>
<dbReference type="PROSITE" id="PS50980">
    <property type="entry name" value="COA_CT_NTER"/>
    <property type="match status" value="1"/>
</dbReference>
<feature type="chain" id="PRO_0000389690" description="Acetyl-coenzyme A carboxylase carboxyl transferase subunit beta">
    <location>
        <begin position="1"/>
        <end position="306"/>
    </location>
</feature>
<feature type="domain" description="CoA carboxyltransferase N-terminal" evidence="2">
    <location>
        <begin position="25"/>
        <end position="294"/>
    </location>
</feature>
<feature type="region of interest" description="Disordered" evidence="3">
    <location>
        <begin position="287"/>
        <end position="306"/>
    </location>
</feature>
<feature type="compositionally biased region" description="Polar residues" evidence="3">
    <location>
        <begin position="294"/>
        <end position="306"/>
    </location>
</feature>
<accession>A1UUE5</accession>
<evidence type="ECO:0000255" key="1">
    <source>
        <dbReference type="HAMAP-Rule" id="MF_01395"/>
    </source>
</evidence>
<evidence type="ECO:0000255" key="2">
    <source>
        <dbReference type="PROSITE-ProRule" id="PRU01136"/>
    </source>
</evidence>
<evidence type="ECO:0000256" key="3">
    <source>
        <dbReference type="SAM" id="MobiDB-lite"/>
    </source>
</evidence>
<protein>
    <recommendedName>
        <fullName evidence="1">Acetyl-coenzyme A carboxylase carboxyl transferase subunit beta</fullName>
        <shortName evidence="1">ACCase subunit beta</shortName>
        <shortName evidence="1">Acetyl-CoA carboxylase carboxyltransferase subunit beta</shortName>
        <ecNumber evidence="1">2.1.3.15</ecNumber>
    </recommendedName>
</protein>
<comment type="function">
    <text evidence="1">Component of the acetyl coenzyme A carboxylase (ACC) complex. Biotin carboxylase (BC) catalyzes the carboxylation of biotin on its carrier protein (BCCP) and then the CO(2) group is transferred by the transcarboxylase to acetyl-CoA to form malonyl-CoA.</text>
</comment>
<comment type="catalytic activity">
    <reaction evidence="1">
        <text>N(6)-carboxybiotinyl-L-lysyl-[protein] + acetyl-CoA = N(6)-biotinyl-L-lysyl-[protein] + malonyl-CoA</text>
        <dbReference type="Rhea" id="RHEA:54728"/>
        <dbReference type="Rhea" id="RHEA-COMP:10505"/>
        <dbReference type="Rhea" id="RHEA-COMP:10506"/>
        <dbReference type="ChEBI" id="CHEBI:57288"/>
        <dbReference type="ChEBI" id="CHEBI:57384"/>
        <dbReference type="ChEBI" id="CHEBI:83144"/>
        <dbReference type="ChEBI" id="CHEBI:83145"/>
        <dbReference type="EC" id="2.1.3.15"/>
    </reaction>
</comment>
<comment type="pathway">
    <text evidence="1">Lipid metabolism; malonyl-CoA biosynthesis; malonyl-CoA from acetyl-CoA: step 1/1.</text>
</comment>
<comment type="subunit">
    <text evidence="1">Acetyl-CoA carboxylase is a heterohexamer composed of biotin carboxyl carrier protein (AccB), biotin carboxylase (AccC) and two subunits each of ACCase subunit alpha (AccA) and ACCase subunit beta (AccD).</text>
</comment>
<comment type="subcellular location">
    <subcellularLocation>
        <location evidence="1">Cytoplasm</location>
    </subcellularLocation>
</comment>
<comment type="similarity">
    <text evidence="1">Belongs to the AccD/PCCB family.</text>
</comment>
<organism>
    <name type="scientific">Bartonella bacilliformis (strain ATCC 35685 / KC583 / Herrer 020/F12,63)</name>
    <dbReference type="NCBI Taxonomy" id="360095"/>
    <lineage>
        <taxon>Bacteria</taxon>
        <taxon>Pseudomonadati</taxon>
        <taxon>Pseudomonadota</taxon>
        <taxon>Alphaproteobacteria</taxon>
        <taxon>Hyphomicrobiales</taxon>
        <taxon>Bartonellaceae</taxon>
        <taxon>Bartonella</taxon>
    </lineage>
</organism>
<reference key="1">
    <citation type="submission" date="2006-12" db="EMBL/GenBank/DDBJ databases">
        <authorList>
            <person name="Hendrix L."/>
            <person name="Mohamoud Y."/>
            <person name="Radune D."/>
            <person name="Shvartsbeyn A."/>
            <person name="Daugherty S."/>
            <person name="Dodson R."/>
            <person name="Durkin A.S."/>
            <person name="Harkins D."/>
            <person name="Huot H."/>
            <person name="Kothari S.P."/>
            <person name="Madupu R."/>
            <person name="Li J."/>
            <person name="Nelson W.C."/>
            <person name="Shrivastava S."/>
            <person name="Giglio M.G."/>
            <person name="Haft D."/>
            <person name="Selengut J."/>
            <person name="Fraser-Ligget C."/>
            <person name="Seshadri R."/>
        </authorList>
    </citation>
    <scope>NUCLEOTIDE SEQUENCE [LARGE SCALE GENOMIC DNA]</scope>
    <source>
        <strain>ATCC 35685 / KC583 / Herrer 020/F12,63</strain>
    </source>
</reference>